<protein>
    <recommendedName>
        <fullName evidence="2">GTP cyclohydrolase 1</fullName>
        <ecNumber evidence="2">3.5.4.16</ecNumber>
    </recommendedName>
    <alternativeName>
        <fullName evidence="2">GTP cyclohydrolase I</fullName>
        <shortName evidence="2">GTP-CH-I</shortName>
    </alternativeName>
</protein>
<reference key="1">
    <citation type="journal article" date="2001" name="Proc. Natl. Acad. Sci. U.S.A.">
        <title>Analysis of the chromosome sequence of the legume symbiont Sinorhizobium meliloti strain 1021.</title>
        <authorList>
            <person name="Capela D."/>
            <person name="Barloy-Hubler F."/>
            <person name="Gouzy J."/>
            <person name="Bothe G."/>
            <person name="Ampe F."/>
            <person name="Batut J."/>
            <person name="Boistard P."/>
            <person name="Becker A."/>
            <person name="Boutry M."/>
            <person name="Cadieu E."/>
            <person name="Dreano S."/>
            <person name="Gloux S."/>
            <person name="Godrie T."/>
            <person name="Goffeau A."/>
            <person name="Kahn D."/>
            <person name="Kiss E."/>
            <person name="Lelaure V."/>
            <person name="Masuy D."/>
            <person name="Pohl T."/>
            <person name="Portetelle D."/>
            <person name="Puehler A."/>
            <person name="Purnelle B."/>
            <person name="Ramsperger U."/>
            <person name="Renard C."/>
            <person name="Thebault P."/>
            <person name="Vandenbol M."/>
            <person name="Weidner S."/>
            <person name="Galibert F."/>
        </authorList>
    </citation>
    <scope>NUCLEOTIDE SEQUENCE [LARGE SCALE GENOMIC DNA]</scope>
    <source>
        <strain>1021</strain>
    </source>
</reference>
<reference key="2">
    <citation type="journal article" date="2001" name="Science">
        <title>The composite genome of the legume symbiont Sinorhizobium meliloti.</title>
        <authorList>
            <person name="Galibert F."/>
            <person name="Finan T.M."/>
            <person name="Long S.R."/>
            <person name="Puehler A."/>
            <person name="Abola P."/>
            <person name="Ampe F."/>
            <person name="Barloy-Hubler F."/>
            <person name="Barnett M.J."/>
            <person name="Becker A."/>
            <person name="Boistard P."/>
            <person name="Bothe G."/>
            <person name="Boutry M."/>
            <person name="Bowser L."/>
            <person name="Buhrmester J."/>
            <person name="Cadieu E."/>
            <person name="Capela D."/>
            <person name="Chain P."/>
            <person name="Cowie A."/>
            <person name="Davis R.W."/>
            <person name="Dreano S."/>
            <person name="Federspiel N.A."/>
            <person name="Fisher R.F."/>
            <person name="Gloux S."/>
            <person name="Godrie T."/>
            <person name="Goffeau A."/>
            <person name="Golding B."/>
            <person name="Gouzy J."/>
            <person name="Gurjal M."/>
            <person name="Hernandez-Lucas I."/>
            <person name="Hong A."/>
            <person name="Huizar L."/>
            <person name="Hyman R.W."/>
            <person name="Jones T."/>
            <person name="Kahn D."/>
            <person name="Kahn M.L."/>
            <person name="Kalman S."/>
            <person name="Keating D.H."/>
            <person name="Kiss E."/>
            <person name="Komp C."/>
            <person name="Lelaure V."/>
            <person name="Masuy D."/>
            <person name="Palm C."/>
            <person name="Peck M.C."/>
            <person name="Pohl T.M."/>
            <person name="Portetelle D."/>
            <person name="Purnelle B."/>
            <person name="Ramsperger U."/>
            <person name="Surzycki R."/>
            <person name="Thebault P."/>
            <person name="Vandenbol M."/>
            <person name="Vorhoelter F.J."/>
            <person name="Weidner S."/>
            <person name="Wells D.H."/>
            <person name="Wong K."/>
            <person name="Yeh K.-C."/>
            <person name="Batut J."/>
        </authorList>
    </citation>
    <scope>NUCLEOTIDE SEQUENCE [LARGE SCALE GENOMIC DNA]</scope>
    <source>
        <strain>1021</strain>
    </source>
</reference>
<feature type="chain" id="PRO_0000119436" description="GTP cyclohydrolase 1">
    <location>
        <begin position="1"/>
        <end position="204"/>
    </location>
</feature>
<feature type="binding site" evidence="2">
    <location>
        <position position="93"/>
    </location>
    <ligand>
        <name>Zn(2+)</name>
        <dbReference type="ChEBI" id="CHEBI:29105"/>
    </ligand>
</feature>
<feature type="binding site" evidence="2">
    <location>
        <position position="96"/>
    </location>
    <ligand>
        <name>Zn(2+)</name>
        <dbReference type="ChEBI" id="CHEBI:29105"/>
    </ligand>
</feature>
<feature type="binding site" evidence="2">
    <location>
        <position position="164"/>
    </location>
    <ligand>
        <name>Zn(2+)</name>
        <dbReference type="ChEBI" id="CHEBI:29105"/>
    </ligand>
</feature>
<name>GCH1_RHIME</name>
<accession>Q92QB4</accession>
<comment type="catalytic activity">
    <reaction evidence="2">
        <text>GTP + H2O = 7,8-dihydroneopterin 3'-triphosphate + formate + H(+)</text>
        <dbReference type="Rhea" id="RHEA:17473"/>
        <dbReference type="ChEBI" id="CHEBI:15377"/>
        <dbReference type="ChEBI" id="CHEBI:15378"/>
        <dbReference type="ChEBI" id="CHEBI:15740"/>
        <dbReference type="ChEBI" id="CHEBI:37565"/>
        <dbReference type="ChEBI" id="CHEBI:58462"/>
        <dbReference type="EC" id="3.5.4.16"/>
    </reaction>
</comment>
<comment type="pathway">
    <text evidence="2">Cofactor biosynthesis; 7,8-dihydroneopterin triphosphate biosynthesis; 7,8-dihydroneopterin triphosphate from GTP: step 1/1.</text>
</comment>
<comment type="subunit">
    <text evidence="1">Toroid-shaped homodecamer, composed of two pentamers of five dimers.</text>
</comment>
<comment type="similarity">
    <text evidence="2">Belongs to the GTP cyclohydrolase I family.</text>
</comment>
<sequence>MDAIVKNFPVLDDTGRPTQKEAEEAVRVLLRWAGEDPAREGLKDTPSRVAKAYREIFGGYDLVAEDVLGRTFEEVSGYDDIVLEKDIPFYSHCEHHMVPIIGKAHIAYLPNGRVLGLSKIARVVDIYARRLQTQEAMTAQIAKAIDETLMPRGVAVMIEAEHLCMAMRGIKKQGATTLTTTFTGAFKSEPAEQVRFMTMLRGFK</sequence>
<gene>
    <name evidence="2" type="primary">folE</name>
    <name type="ordered locus">R01420</name>
    <name type="ORF">SMc01005</name>
</gene>
<evidence type="ECO:0000250" key="1"/>
<evidence type="ECO:0000255" key="2">
    <source>
        <dbReference type="HAMAP-Rule" id="MF_00223"/>
    </source>
</evidence>
<keyword id="KW-0342">GTP-binding</keyword>
<keyword id="KW-0378">Hydrolase</keyword>
<keyword id="KW-0479">Metal-binding</keyword>
<keyword id="KW-0547">Nucleotide-binding</keyword>
<keyword id="KW-0554">One-carbon metabolism</keyword>
<keyword id="KW-1185">Reference proteome</keyword>
<keyword id="KW-0862">Zinc</keyword>
<dbReference type="EC" id="3.5.4.16" evidence="2"/>
<dbReference type="EMBL" id="AL591688">
    <property type="protein sequence ID" value="CAC45999.1"/>
    <property type="molecule type" value="Genomic_DNA"/>
</dbReference>
<dbReference type="RefSeq" id="NP_385526.1">
    <property type="nucleotide sequence ID" value="NC_003047.1"/>
</dbReference>
<dbReference type="RefSeq" id="WP_003534700.1">
    <property type="nucleotide sequence ID" value="NC_003047.1"/>
</dbReference>
<dbReference type="SMR" id="Q92QB4"/>
<dbReference type="EnsemblBacteria" id="CAC45999">
    <property type="protein sequence ID" value="CAC45999"/>
    <property type="gene ID" value="SMc01005"/>
</dbReference>
<dbReference type="GeneID" id="89575745"/>
<dbReference type="KEGG" id="sme:SMc01005"/>
<dbReference type="PATRIC" id="fig|266834.11.peg.2840"/>
<dbReference type="eggNOG" id="COG0302">
    <property type="taxonomic scope" value="Bacteria"/>
</dbReference>
<dbReference type="HOGENOM" id="CLU_049768_3_1_5"/>
<dbReference type="OrthoDB" id="9801207at2"/>
<dbReference type="UniPathway" id="UPA00848">
    <property type="reaction ID" value="UER00151"/>
</dbReference>
<dbReference type="Proteomes" id="UP000001976">
    <property type="component" value="Chromosome"/>
</dbReference>
<dbReference type="GO" id="GO:0005737">
    <property type="term" value="C:cytoplasm"/>
    <property type="evidence" value="ECO:0007669"/>
    <property type="project" value="TreeGrafter"/>
</dbReference>
<dbReference type="GO" id="GO:0005525">
    <property type="term" value="F:GTP binding"/>
    <property type="evidence" value="ECO:0007669"/>
    <property type="project" value="UniProtKB-KW"/>
</dbReference>
<dbReference type="GO" id="GO:0003934">
    <property type="term" value="F:GTP cyclohydrolase I activity"/>
    <property type="evidence" value="ECO:0007669"/>
    <property type="project" value="UniProtKB-UniRule"/>
</dbReference>
<dbReference type="GO" id="GO:0008270">
    <property type="term" value="F:zinc ion binding"/>
    <property type="evidence" value="ECO:0007669"/>
    <property type="project" value="UniProtKB-UniRule"/>
</dbReference>
<dbReference type="GO" id="GO:0006730">
    <property type="term" value="P:one-carbon metabolic process"/>
    <property type="evidence" value="ECO:0007669"/>
    <property type="project" value="UniProtKB-UniRule"/>
</dbReference>
<dbReference type="GO" id="GO:0006729">
    <property type="term" value="P:tetrahydrobiopterin biosynthetic process"/>
    <property type="evidence" value="ECO:0007669"/>
    <property type="project" value="TreeGrafter"/>
</dbReference>
<dbReference type="GO" id="GO:0046654">
    <property type="term" value="P:tetrahydrofolate biosynthetic process"/>
    <property type="evidence" value="ECO:0007669"/>
    <property type="project" value="UniProtKB-UniRule"/>
</dbReference>
<dbReference type="FunFam" id="1.10.286.10:FF:000001">
    <property type="entry name" value="GTP cyclohydrolase 1"/>
    <property type="match status" value="1"/>
</dbReference>
<dbReference type="FunFam" id="3.30.1130.10:FF:000001">
    <property type="entry name" value="GTP cyclohydrolase 1"/>
    <property type="match status" value="1"/>
</dbReference>
<dbReference type="Gene3D" id="1.10.286.10">
    <property type="match status" value="1"/>
</dbReference>
<dbReference type="Gene3D" id="3.30.1130.10">
    <property type="match status" value="1"/>
</dbReference>
<dbReference type="HAMAP" id="MF_00223">
    <property type="entry name" value="FolE"/>
    <property type="match status" value="1"/>
</dbReference>
<dbReference type="InterPro" id="IPR043133">
    <property type="entry name" value="GTP-CH-I_C/QueF"/>
</dbReference>
<dbReference type="InterPro" id="IPR043134">
    <property type="entry name" value="GTP-CH-I_N"/>
</dbReference>
<dbReference type="InterPro" id="IPR001474">
    <property type="entry name" value="GTP_CycHdrlase_I"/>
</dbReference>
<dbReference type="InterPro" id="IPR018234">
    <property type="entry name" value="GTP_CycHdrlase_I_CS"/>
</dbReference>
<dbReference type="InterPro" id="IPR020602">
    <property type="entry name" value="GTP_CycHdrlase_I_dom"/>
</dbReference>
<dbReference type="NCBIfam" id="TIGR00063">
    <property type="entry name" value="folE"/>
    <property type="match status" value="1"/>
</dbReference>
<dbReference type="NCBIfam" id="NF006825">
    <property type="entry name" value="PRK09347.1-2"/>
    <property type="match status" value="1"/>
</dbReference>
<dbReference type="NCBIfam" id="NF006826">
    <property type="entry name" value="PRK09347.1-3"/>
    <property type="match status" value="1"/>
</dbReference>
<dbReference type="PANTHER" id="PTHR11109:SF7">
    <property type="entry name" value="GTP CYCLOHYDROLASE 1"/>
    <property type="match status" value="1"/>
</dbReference>
<dbReference type="PANTHER" id="PTHR11109">
    <property type="entry name" value="GTP CYCLOHYDROLASE I"/>
    <property type="match status" value="1"/>
</dbReference>
<dbReference type="Pfam" id="PF01227">
    <property type="entry name" value="GTP_cyclohydroI"/>
    <property type="match status" value="1"/>
</dbReference>
<dbReference type="SUPFAM" id="SSF55620">
    <property type="entry name" value="Tetrahydrobiopterin biosynthesis enzymes-like"/>
    <property type="match status" value="1"/>
</dbReference>
<dbReference type="PROSITE" id="PS00859">
    <property type="entry name" value="GTP_CYCLOHYDROL_1_1"/>
    <property type="match status" value="1"/>
</dbReference>
<dbReference type="PROSITE" id="PS00860">
    <property type="entry name" value="GTP_CYCLOHYDROL_1_2"/>
    <property type="match status" value="1"/>
</dbReference>
<organism>
    <name type="scientific">Rhizobium meliloti (strain 1021)</name>
    <name type="common">Ensifer meliloti</name>
    <name type="synonym">Sinorhizobium meliloti</name>
    <dbReference type="NCBI Taxonomy" id="266834"/>
    <lineage>
        <taxon>Bacteria</taxon>
        <taxon>Pseudomonadati</taxon>
        <taxon>Pseudomonadota</taxon>
        <taxon>Alphaproteobacteria</taxon>
        <taxon>Hyphomicrobiales</taxon>
        <taxon>Rhizobiaceae</taxon>
        <taxon>Sinorhizobium/Ensifer group</taxon>
        <taxon>Sinorhizobium</taxon>
    </lineage>
</organism>
<proteinExistence type="inferred from homology"/>